<protein>
    <recommendedName>
        <fullName>Fiber protein</fullName>
        <shortName>SPIKE</shortName>
    </recommendedName>
    <alternativeName>
        <fullName>Protein IV</fullName>
    </alternativeName>
</protein>
<organism>
    <name type="scientific">Human adenovirus B serotype 11 (strain Slobiski)</name>
    <name type="common">HAdV-11</name>
    <name type="synonym">Human adenovirus 11P (strain Slobiski)</name>
    <dbReference type="NCBI Taxonomy" id="343462"/>
    <lineage>
        <taxon>Viruses</taxon>
        <taxon>Varidnaviria</taxon>
        <taxon>Bamfordvirae</taxon>
        <taxon>Preplasmiviricota</taxon>
        <taxon>Tectiliviricetes</taxon>
        <taxon>Rowavirales</taxon>
        <taxon>Adenoviridae</taxon>
        <taxon>Mastadenovirus</taxon>
        <taxon>Human mastadenovirus B</taxon>
    </lineage>
</organism>
<reference key="1">
    <citation type="journal article" date="1993" name="Virology">
        <title>Hemagglutination properties and nucleotide sequence analysis of the fiber gene of adenovirus genome types 11p and 11a.</title>
        <authorList>
            <person name="Mei Y.-F."/>
            <person name="Wadell G."/>
        </authorList>
    </citation>
    <scope>NUCLEOTIDE SEQUENCE [GENOMIC DNA]</scope>
</reference>
<reference key="2">
    <citation type="journal article" date="2005" name="J. Virol.">
        <title>Adenovirus receptors.</title>
        <authorList>
            <person name="Zhang Y."/>
            <person name="Bergelson J.M."/>
        </authorList>
    </citation>
    <scope>REVIEW</scope>
</reference>
<gene>
    <name type="ORF">L5</name>
</gene>
<evidence type="ECO:0000250" key="1"/>
<evidence type="ECO:0000305" key="2"/>
<evidence type="ECO:0007829" key="3">
    <source>
        <dbReference type="PDB" id="2O39"/>
    </source>
</evidence>
<evidence type="ECO:0007829" key="4">
    <source>
        <dbReference type="PDB" id="3EXV"/>
    </source>
</evidence>
<evidence type="ECO:0007829" key="5">
    <source>
        <dbReference type="PDB" id="8QJX"/>
    </source>
</evidence>
<name>SPIKE_ADE1P</name>
<sequence length="325" mass="35538">MTKRVRLSDSFNPVYPYEDESTSQHPFINPGFISPNGFTQSPNGVLTLKCLTPLTTTGGSLQLKVGGGLTVDDTNGFLKENISATTPLVKTGHSIGLPLGAGLGTNENKLCIKLGQGLTFNSNNICIDDNINTLWTGVNPTEANCQIMNSSESNDCKLILTLVKTGALVTAFVYVIGVSNNFNMLTTHRNINFTAELFFDSTGNLLTRLSSLKTPLNHKSGQNMATGAITNAKGFMPSTTAYPFNDNSREKENYIYGTCYYTASDRTAFPIDISVMLNRRAINDETSYCIRITWSWNTGDAPEVQTSATTLVTSPFTFYYIREDD</sequence>
<proteinExistence type="evidence at protein level"/>
<accession>P35774</accession>
<feature type="chain" id="PRO_0000221794" description="Fiber protein">
    <location>
        <begin position="1"/>
        <end position="325"/>
    </location>
</feature>
<feature type="helix" evidence="4">
    <location>
        <begin position="130"/>
        <end position="132"/>
    </location>
</feature>
<feature type="strand" evidence="4">
    <location>
        <begin position="133"/>
        <end position="135"/>
    </location>
</feature>
<feature type="strand" evidence="4">
    <location>
        <begin position="151"/>
        <end position="153"/>
    </location>
</feature>
<feature type="strand" evidence="4">
    <location>
        <begin position="156"/>
        <end position="165"/>
    </location>
</feature>
<feature type="strand" evidence="4">
    <location>
        <begin position="168"/>
        <end position="177"/>
    </location>
</feature>
<feature type="helix" evidence="4">
    <location>
        <begin position="180"/>
        <end position="183"/>
    </location>
</feature>
<feature type="helix" evidence="4">
    <location>
        <begin position="184"/>
        <end position="187"/>
    </location>
</feature>
<feature type="strand" evidence="4">
    <location>
        <begin position="189"/>
        <end position="199"/>
    </location>
</feature>
<feature type="turn" evidence="4">
    <location>
        <begin position="207"/>
        <end position="209"/>
    </location>
</feature>
<feature type="strand" evidence="4">
    <location>
        <begin position="210"/>
        <end position="212"/>
    </location>
</feature>
<feature type="strand" evidence="5">
    <location>
        <begin position="217"/>
        <end position="220"/>
    </location>
</feature>
<feature type="strand" evidence="5">
    <location>
        <begin position="223"/>
        <end position="225"/>
    </location>
</feature>
<feature type="helix" evidence="4">
    <location>
        <begin position="232"/>
        <end position="235"/>
    </location>
</feature>
<feature type="turn" evidence="4">
    <location>
        <begin position="239"/>
        <end position="241"/>
    </location>
</feature>
<feature type="helix" evidence="4">
    <location>
        <begin position="247"/>
        <end position="253"/>
    </location>
</feature>
<feature type="strand" evidence="4">
    <location>
        <begin position="254"/>
        <end position="262"/>
    </location>
</feature>
<feature type="strand" evidence="4">
    <location>
        <begin position="268"/>
        <end position="279"/>
    </location>
</feature>
<feature type="strand" evidence="3">
    <location>
        <begin position="283"/>
        <end position="285"/>
    </location>
</feature>
<feature type="strand" evidence="4">
    <location>
        <begin position="288"/>
        <end position="297"/>
    </location>
</feature>
<feature type="turn" evidence="4">
    <location>
        <begin position="305"/>
        <end position="307"/>
    </location>
</feature>
<feature type="strand" evidence="4">
    <location>
        <begin position="316"/>
        <end position="322"/>
    </location>
</feature>
<organismHost>
    <name type="scientific">Homo sapiens</name>
    <name type="common">Human</name>
    <dbReference type="NCBI Taxonomy" id="9606"/>
</organismHost>
<comment type="function">
    <text>Forms spikes that protrude from each vertex of the icosahedral capsid. Interacts with host receptor CD46 to provide virion initial attachment to target cell. Fiber proteins are shed during virus entry, when virus is still at the cell surface.</text>
</comment>
<comment type="subunit">
    <text evidence="1">Homotrimer. Interacts with host receptor CD46. Interacts (via N-terminal tail region) with pentons (By similarity).</text>
</comment>
<comment type="subcellular location">
    <subcellularLocation>
        <location evidence="1">Virion</location>
    </subcellularLocation>
    <subcellularLocation>
        <location evidence="1">Host nucleus</location>
    </subcellularLocation>
    <text evidence="1">Anchored to the pentons, protrudes from the virion surface.</text>
</comment>
<comment type="induction">
    <text>Expressed in the late phase of the viral replicative cycle.</text>
</comment>
<comment type="domain">
    <text evidence="1">The tail region anchors the fiber to penton base capsomers, whereas the shaft, built from several repeated motifs, allows the knob to protrude from the virion.</text>
</comment>
<comment type="miscellaneous">
    <text evidence="1">All late proteins expressed from the major late promoter are produced by alternative splicing and alternative polyadenylation of the same gene giving rise to non-overlapping ORFs. A leader sequence is present in the N-terminus of all these mRNAs and is recognized by the viral shutoff protein to provide expression although conventional translation via ribosome scanning from the cap has been shut off in the host cell (By similarity).</text>
</comment>
<comment type="similarity">
    <text evidence="2">Belongs to the adenoviridae fiber family.</text>
</comment>
<dbReference type="EMBL" id="AF532578">
    <property type="protein sequence ID" value="AAA42490.1"/>
    <property type="molecule type" value="Genomic_DNA"/>
</dbReference>
<dbReference type="PIR" id="D37476">
    <property type="entry name" value="D37476"/>
</dbReference>
<dbReference type="PDB" id="2O39">
    <property type="method" value="X-ray"/>
    <property type="resolution" value="2.85 A"/>
    <property type="chains" value="A/B=129-325"/>
</dbReference>
<dbReference type="PDB" id="3EXV">
    <property type="method" value="X-ray"/>
    <property type="resolution" value="1.45 A"/>
    <property type="chains" value="A=117-325"/>
</dbReference>
<dbReference type="PDB" id="8QJX">
    <property type="method" value="EM"/>
    <property type="resolution" value="3.30 A"/>
    <property type="chains" value="A/B/C=1-325"/>
</dbReference>
<dbReference type="PDB" id="8QJY">
    <property type="method" value="EM"/>
    <property type="resolution" value="3.50 A"/>
    <property type="chains" value="A/B/C=1-325"/>
</dbReference>
<dbReference type="PDB" id="8QK3">
    <property type="method" value="EM"/>
    <property type="resolution" value="3.20 A"/>
    <property type="chains" value="A/B/C=1-325"/>
</dbReference>
<dbReference type="PDBsum" id="2O39"/>
<dbReference type="PDBsum" id="3EXV"/>
<dbReference type="PDBsum" id="8QJX"/>
<dbReference type="PDBsum" id="8QJY"/>
<dbReference type="PDBsum" id="8QK3"/>
<dbReference type="EMDB" id="EMD-18453"/>
<dbReference type="EMDB" id="EMD-18454"/>
<dbReference type="EMDB" id="EMD-18455"/>
<dbReference type="SMR" id="P35774"/>
<dbReference type="EvolutionaryTrace" id="P35774"/>
<dbReference type="Proteomes" id="UP000128793">
    <property type="component" value="Segment"/>
</dbReference>
<dbReference type="GO" id="GO:0042025">
    <property type="term" value="C:host cell nucleus"/>
    <property type="evidence" value="ECO:0007669"/>
    <property type="project" value="UniProtKB-SubCell"/>
</dbReference>
<dbReference type="GO" id="GO:0019028">
    <property type="term" value="C:viral capsid"/>
    <property type="evidence" value="ECO:0007669"/>
    <property type="project" value="UniProtKB-KW"/>
</dbReference>
<dbReference type="GO" id="GO:0098671">
    <property type="term" value="P:adhesion receptor-mediated virion attachment to host cell"/>
    <property type="evidence" value="ECO:0007669"/>
    <property type="project" value="UniProtKB-KW"/>
</dbReference>
<dbReference type="GO" id="GO:0007155">
    <property type="term" value="P:cell adhesion"/>
    <property type="evidence" value="ECO:0007669"/>
    <property type="project" value="InterPro"/>
</dbReference>
<dbReference type="GO" id="GO:0046718">
    <property type="term" value="P:symbiont entry into host cell"/>
    <property type="evidence" value="ECO:0007669"/>
    <property type="project" value="UniProtKB-KW"/>
</dbReference>
<dbReference type="CDD" id="cd07964">
    <property type="entry name" value="RBP-H"/>
    <property type="match status" value="1"/>
</dbReference>
<dbReference type="Gene3D" id="2.60.90.10">
    <property type="entry name" value="Adenovirus pIV-related, attachment domain"/>
    <property type="match status" value="1"/>
</dbReference>
<dbReference type="Gene3D" id="2.10.25.20">
    <property type="entry name" value="reovirus attachment protein sigma1, domain 1"/>
    <property type="match status" value="1"/>
</dbReference>
<dbReference type="InterPro" id="IPR000931">
    <property type="entry name" value="Adeno_fibre"/>
</dbReference>
<dbReference type="InterPro" id="IPR000978">
    <property type="entry name" value="Adeno_fibre_knob"/>
</dbReference>
<dbReference type="InterPro" id="IPR000939">
    <property type="entry name" value="Adenobir_fibre_prot_rpt/shaft"/>
</dbReference>
<dbReference type="InterPro" id="IPR008982">
    <property type="entry name" value="Adenovirus_pIV-like_att"/>
</dbReference>
<dbReference type="InterPro" id="IPR009013">
    <property type="entry name" value="Attachment_protein_shaft_sf"/>
</dbReference>
<dbReference type="Pfam" id="PF00541">
    <property type="entry name" value="Adeno_knob"/>
    <property type="match status" value="1"/>
</dbReference>
<dbReference type="Pfam" id="PF00608">
    <property type="entry name" value="Adeno_shaft"/>
    <property type="match status" value="2"/>
</dbReference>
<dbReference type="PRINTS" id="PR00307">
    <property type="entry name" value="ADENOVSFIBRE"/>
</dbReference>
<dbReference type="SUPFAM" id="SSF51225">
    <property type="entry name" value="Fibre shaft of virus attachment proteins"/>
    <property type="match status" value="1"/>
</dbReference>
<dbReference type="SUPFAM" id="SSF49835">
    <property type="entry name" value="Virus attachment protein globular domain"/>
    <property type="match status" value="1"/>
</dbReference>
<keyword id="KW-0002">3D-structure</keyword>
<keyword id="KW-0167">Capsid protein</keyword>
<keyword id="KW-1048">Host nucleus</keyword>
<keyword id="KW-0945">Host-virus interaction</keyword>
<keyword id="KW-0426">Late protein</keyword>
<keyword id="KW-1233">Viral attachment to host adhesion receptor</keyword>
<keyword id="KW-1161">Viral attachment to host cell</keyword>
<keyword id="KW-0946">Virion</keyword>
<keyword id="KW-1160">Virus entry into host cell</keyword>